<organism>
    <name type="scientific">Escherichia coli (strain SMS-3-5 / SECEC)</name>
    <dbReference type="NCBI Taxonomy" id="439855"/>
    <lineage>
        <taxon>Bacteria</taxon>
        <taxon>Pseudomonadati</taxon>
        <taxon>Pseudomonadota</taxon>
        <taxon>Gammaproteobacteria</taxon>
        <taxon>Enterobacterales</taxon>
        <taxon>Enterobacteriaceae</taxon>
        <taxon>Escherichia</taxon>
    </lineage>
</organism>
<dbReference type="EC" id="5.3.1.6" evidence="1"/>
<dbReference type="EMBL" id="CP000970">
    <property type="protein sequence ID" value="ACB20118.1"/>
    <property type="molecule type" value="Genomic_DNA"/>
</dbReference>
<dbReference type="RefSeq" id="WP_000189743.1">
    <property type="nucleotide sequence ID" value="NC_010498.1"/>
</dbReference>
<dbReference type="SMR" id="B1LDB5"/>
<dbReference type="GeneID" id="93779085"/>
<dbReference type="KEGG" id="ecm:EcSMS35_3047"/>
<dbReference type="HOGENOM" id="CLU_056590_1_1_6"/>
<dbReference type="UniPathway" id="UPA00115">
    <property type="reaction ID" value="UER00412"/>
</dbReference>
<dbReference type="Proteomes" id="UP000007011">
    <property type="component" value="Chromosome"/>
</dbReference>
<dbReference type="GO" id="GO:0005829">
    <property type="term" value="C:cytosol"/>
    <property type="evidence" value="ECO:0007669"/>
    <property type="project" value="TreeGrafter"/>
</dbReference>
<dbReference type="GO" id="GO:0004751">
    <property type="term" value="F:ribose-5-phosphate isomerase activity"/>
    <property type="evidence" value="ECO:0007669"/>
    <property type="project" value="UniProtKB-UniRule"/>
</dbReference>
<dbReference type="GO" id="GO:0006014">
    <property type="term" value="P:D-ribose metabolic process"/>
    <property type="evidence" value="ECO:0007669"/>
    <property type="project" value="TreeGrafter"/>
</dbReference>
<dbReference type="GO" id="GO:0009052">
    <property type="term" value="P:pentose-phosphate shunt, non-oxidative branch"/>
    <property type="evidence" value="ECO:0007669"/>
    <property type="project" value="UniProtKB-UniRule"/>
</dbReference>
<dbReference type="CDD" id="cd01398">
    <property type="entry name" value="RPI_A"/>
    <property type="match status" value="1"/>
</dbReference>
<dbReference type="FunFam" id="3.30.70.260:FF:000004">
    <property type="entry name" value="Ribose-5-phosphate isomerase A"/>
    <property type="match status" value="1"/>
</dbReference>
<dbReference type="FunFam" id="3.40.50.1360:FF:000001">
    <property type="entry name" value="Ribose-5-phosphate isomerase A"/>
    <property type="match status" value="1"/>
</dbReference>
<dbReference type="Gene3D" id="3.30.70.260">
    <property type="match status" value="1"/>
</dbReference>
<dbReference type="Gene3D" id="3.40.50.1360">
    <property type="match status" value="1"/>
</dbReference>
<dbReference type="HAMAP" id="MF_00170">
    <property type="entry name" value="Rib_5P_isom_A"/>
    <property type="match status" value="1"/>
</dbReference>
<dbReference type="InterPro" id="IPR037171">
    <property type="entry name" value="NagB/RpiA_transferase-like"/>
</dbReference>
<dbReference type="InterPro" id="IPR020672">
    <property type="entry name" value="Ribose5P_isomerase_typA_subgr"/>
</dbReference>
<dbReference type="InterPro" id="IPR004788">
    <property type="entry name" value="Ribose5P_isomerase_type_A"/>
</dbReference>
<dbReference type="NCBIfam" id="NF001924">
    <property type="entry name" value="PRK00702.1"/>
    <property type="match status" value="1"/>
</dbReference>
<dbReference type="NCBIfam" id="TIGR00021">
    <property type="entry name" value="rpiA"/>
    <property type="match status" value="1"/>
</dbReference>
<dbReference type="PANTHER" id="PTHR11934">
    <property type="entry name" value="RIBOSE-5-PHOSPHATE ISOMERASE"/>
    <property type="match status" value="1"/>
</dbReference>
<dbReference type="PANTHER" id="PTHR11934:SF0">
    <property type="entry name" value="RIBOSE-5-PHOSPHATE ISOMERASE"/>
    <property type="match status" value="1"/>
</dbReference>
<dbReference type="Pfam" id="PF06026">
    <property type="entry name" value="Rib_5-P_isom_A"/>
    <property type="match status" value="1"/>
</dbReference>
<dbReference type="SUPFAM" id="SSF75445">
    <property type="entry name" value="D-ribose-5-phosphate isomerase (RpiA), lid domain"/>
    <property type="match status" value="1"/>
</dbReference>
<dbReference type="SUPFAM" id="SSF100950">
    <property type="entry name" value="NagB/RpiA/CoA transferase-like"/>
    <property type="match status" value="1"/>
</dbReference>
<accession>B1LDB5</accession>
<feature type="chain" id="PRO_1000194703" description="Ribose-5-phosphate isomerase A">
    <location>
        <begin position="1"/>
        <end position="219"/>
    </location>
</feature>
<feature type="active site" description="Proton acceptor" evidence="1">
    <location>
        <position position="103"/>
    </location>
</feature>
<feature type="binding site" evidence="1">
    <location>
        <begin position="28"/>
        <end position="31"/>
    </location>
    <ligand>
        <name>substrate</name>
    </ligand>
</feature>
<feature type="binding site" evidence="1">
    <location>
        <begin position="81"/>
        <end position="84"/>
    </location>
    <ligand>
        <name>substrate</name>
    </ligand>
</feature>
<feature type="binding site" evidence="1">
    <location>
        <begin position="94"/>
        <end position="97"/>
    </location>
    <ligand>
        <name>substrate</name>
    </ligand>
</feature>
<feature type="binding site" evidence="1">
    <location>
        <position position="121"/>
    </location>
    <ligand>
        <name>substrate</name>
    </ligand>
</feature>
<name>RPIA_ECOSM</name>
<sequence>MTQDELKKAVGWAALQYVQPGTIVGVGTGSTAAHFIDALGTMKGQIEGAVSSSDASTEKLKSLGIHVFDLNEVDSLGIYVDGADEINGHMQMIKGGGAALTREKIIASVAEKFICIADASKQVDILGKFPLPVEVIPMARSAVARQLVKLGGRPEYRQGVVTDNGNVILDVHGMEILDPIAMENAINAIPGVVTVGLFANRGADVALIGTPDGVKTIVK</sequence>
<evidence type="ECO:0000255" key="1">
    <source>
        <dbReference type="HAMAP-Rule" id="MF_00170"/>
    </source>
</evidence>
<proteinExistence type="inferred from homology"/>
<comment type="function">
    <text evidence="1">Catalyzes the reversible conversion of ribose-5-phosphate to ribulose 5-phosphate.</text>
</comment>
<comment type="catalytic activity">
    <reaction evidence="1">
        <text>aldehydo-D-ribose 5-phosphate = D-ribulose 5-phosphate</text>
        <dbReference type="Rhea" id="RHEA:14657"/>
        <dbReference type="ChEBI" id="CHEBI:58121"/>
        <dbReference type="ChEBI" id="CHEBI:58273"/>
        <dbReference type="EC" id="5.3.1.6"/>
    </reaction>
</comment>
<comment type="pathway">
    <text evidence="1">Carbohydrate degradation; pentose phosphate pathway; D-ribose 5-phosphate from D-ribulose 5-phosphate (non-oxidative stage): step 1/1.</text>
</comment>
<comment type="subunit">
    <text evidence="1">Homodimer.</text>
</comment>
<comment type="similarity">
    <text evidence="1">Belongs to the ribose 5-phosphate isomerase family.</text>
</comment>
<protein>
    <recommendedName>
        <fullName evidence="1">Ribose-5-phosphate isomerase A</fullName>
        <ecNumber evidence="1">5.3.1.6</ecNumber>
    </recommendedName>
    <alternativeName>
        <fullName evidence="1">Phosphoriboisomerase A</fullName>
        <shortName evidence="1">PRI</shortName>
    </alternativeName>
</protein>
<gene>
    <name evidence="1" type="primary">rpiA</name>
    <name type="ordered locus">EcSMS35_3047</name>
</gene>
<keyword id="KW-0413">Isomerase</keyword>
<reference key="1">
    <citation type="journal article" date="2008" name="J. Bacteriol.">
        <title>Insights into the environmental resistance gene pool from the genome sequence of the multidrug-resistant environmental isolate Escherichia coli SMS-3-5.</title>
        <authorList>
            <person name="Fricke W.F."/>
            <person name="Wright M.S."/>
            <person name="Lindell A.H."/>
            <person name="Harkins D.M."/>
            <person name="Baker-Austin C."/>
            <person name="Ravel J."/>
            <person name="Stepanauskas R."/>
        </authorList>
    </citation>
    <scope>NUCLEOTIDE SEQUENCE [LARGE SCALE GENOMIC DNA]</scope>
    <source>
        <strain>SMS-3-5 / SECEC</strain>
    </source>
</reference>